<comment type="function">
    <text evidence="1">Single strand-specific metallo-endoribonuclease involved in late-stage 70S ribosome quality control and in maturation of the 3' terminus of the 16S rRNA.</text>
</comment>
<comment type="cofactor">
    <cofactor evidence="1">
        <name>Zn(2+)</name>
        <dbReference type="ChEBI" id="CHEBI:29105"/>
    </cofactor>
    <text evidence="1">Binds 1 zinc ion.</text>
</comment>
<comment type="subcellular location">
    <subcellularLocation>
        <location evidence="1">Cytoplasm</location>
    </subcellularLocation>
</comment>
<comment type="similarity">
    <text evidence="1">Belongs to the endoribonuclease YbeY family.</text>
</comment>
<gene>
    <name evidence="1" type="primary">ybeY</name>
    <name type="ordered locus">APH_1290</name>
</gene>
<keyword id="KW-0963">Cytoplasm</keyword>
<keyword id="KW-0255">Endonuclease</keyword>
<keyword id="KW-0378">Hydrolase</keyword>
<keyword id="KW-0479">Metal-binding</keyword>
<keyword id="KW-0540">Nuclease</keyword>
<keyword id="KW-0690">Ribosome biogenesis</keyword>
<keyword id="KW-0698">rRNA processing</keyword>
<keyword id="KW-0862">Zinc</keyword>
<evidence type="ECO:0000255" key="1">
    <source>
        <dbReference type="HAMAP-Rule" id="MF_00009"/>
    </source>
</evidence>
<name>YBEY_ANAPZ</name>
<proteinExistence type="inferred from homology"/>
<organism>
    <name type="scientific">Anaplasma phagocytophilum (strain HZ)</name>
    <dbReference type="NCBI Taxonomy" id="212042"/>
    <lineage>
        <taxon>Bacteria</taxon>
        <taxon>Pseudomonadati</taxon>
        <taxon>Pseudomonadota</taxon>
        <taxon>Alphaproteobacteria</taxon>
        <taxon>Rickettsiales</taxon>
        <taxon>Anaplasmataceae</taxon>
        <taxon>Anaplasma</taxon>
        <taxon>phagocytophilum group</taxon>
    </lineage>
</organism>
<sequence>MPVEVSTIDRKWYRIIRKPKATSQEIVLFALRELKVDRYNPIVSVVLAHDALLLELNHKYRNINKPTNVLSFNYEALSHNCCLGEIFLSIDRLTYESKTLGVEVHAHFTHMLIHGVLHILGYDHEVPEDAQEMQALEIDLLSKRSIENPYLIQE</sequence>
<dbReference type="EC" id="3.1.-.-" evidence="1"/>
<dbReference type="EMBL" id="CP000235">
    <property type="protein sequence ID" value="ABD43493.1"/>
    <property type="molecule type" value="Genomic_DNA"/>
</dbReference>
<dbReference type="RefSeq" id="WP_011451311.1">
    <property type="nucleotide sequence ID" value="NC_007797.1"/>
</dbReference>
<dbReference type="SMR" id="Q2GIJ7"/>
<dbReference type="STRING" id="212042.APH_1290"/>
<dbReference type="PaxDb" id="212042-APH_1290"/>
<dbReference type="EnsemblBacteria" id="ABD43493">
    <property type="protein sequence ID" value="ABD43493"/>
    <property type="gene ID" value="APH_1290"/>
</dbReference>
<dbReference type="GeneID" id="92747835"/>
<dbReference type="KEGG" id="aph:APH_1290"/>
<dbReference type="eggNOG" id="COG0319">
    <property type="taxonomic scope" value="Bacteria"/>
</dbReference>
<dbReference type="HOGENOM" id="CLU_106710_0_0_5"/>
<dbReference type="Proteomes" id="UP000001943">
    <property type="component" value="Chromosome"/>
</dbReference>
<dbReference type="GO" id="GO:0005737">
    <property type="term" value="C:cytoplasm"/>
    <property type="evidence" value="ECO:0007669"/>
    <property type="project" value="UniProtKB-SubCell"/>
</dbReference>
<dbReference type="GO" id="GO:0004222">
    <property type="term" value="F:metalloendopeptidase activity"/>
    <property type="evidence" value="ECO:0007669"/>
    <property type="project" value="InterPro"/>
</dbReference>
<dbReference type="GO" id="GO:0004521">
    <property type="term" value="F:RNA endonuclease activity"/>
    <property type="evidence" value="ECO:0007669"/>
    <property type="project" value="UniProtKB-UniRule"/>
</dbReference>
<dbReference type="GO" id="GO:0008270">
    <property type="term" value="F:zinc ion binding"/>
    <property type="evidence" value="ECO:0007669"/>
    <property type="project" value="UniProtKB-UniRule"/>
</dbReference>
<dbReference type="GO" id="GO:0006364">
    <property type="term" value="P:rRNA processing"/>
    <property type="evidence" value="ECO:0007669"/>
    <property type="project" value="UniProtKB-UniRule"/>
</dbReference>
<dbReference type="Gene3D" id="3.40.390.30">
    <property type="entry name" value="Metalloproteases ('zincins'), catalytic domain"/>
    <property type="match status" value="1"/>
</dbReference>
<dbReference type="HAMAP" id="MF_00009">
    <property type="entry name" value="Endoribonucl_YbeY"/>
    <property type="match status" value="1"/>
</dbReference>
<dbReference type="InterPro" id="IPR023091">
    <property type="entry name" value="MetalPrtase_cat_dom_sf_prd"/>
</dbReference>
<dbReference type="InterPro" id="IPR002036">
    <property type="entry name" value="YbeY"/>
</dbReference>
<dbReference type="InterPro" id="IPR020549">
    <property type="entry name" value="YbeY_CS"/>
</dbReference>
<dbReference type="NCBIfam" id="TIGR00043">
    <property type="entry name" value="rRNA maturation RNase YbeY"/>
    <property type="match status" value="1"/>
</dbReference>
<dbReference type="PANTHER" id="PTHR46986">
    <property type="entry name" value="ENDORIBONUCLEASE YBEY, CHLOROPLASTIC"/>
    <property type="match status" value="1"/>
</dbReference>
<dbReference type="PANTHER" id="PTHR46986:SF1">
    <property type="entry name" value="ENDORIBONUCLEASE YBEY, CHLOROPLASTIC"/>
    <property type="match status" value="1"/>
</dbReference>
<dbReference type="Pfam" id="PF02130">
    <property type="entry name" value="YbeY"/>
    <property type="match status" value="1"/>
</dbReference>
<dbReference type="SUPFAM" id="SSF55486">
    <property type="entry name" value="Metalloproteases ('zincins'), catalytic domain"/>
    <property type="match status" value="1"/>
</dbReference>
<dbReference type="PROSITE" id="PS01306">
    <property type="entry name" value="UPF0054"/>
    <property type="match status" value="1"/>
</dbReference>
<reference key="1">
    <citation type="journal article" date="2006" name="PLoS Genet.">
        <title>Comparative genomics of emerging human ehrlichiosis agents.</title>
        <authorList>
            <person name="Dunning Hotopp J.C."/>
            <person name="Lin M."/>
            <person name="Madupu R."/>
            <person name="Crabtree J."/>
            <person name="Angiuoli S.V."/>
            <person name="Eisen J.A."/>
            <person name="Seshadri R."/>
            <person name="Ren Q."/>
            <person name="Wu M."/>
            <person name="Utterback T.R."/>
            <person name="Smith S."/>
            <person name="Lewis M."/>
            <person name="Khouri H."/>
            <person name="Zhang C."/>
            <person name="Niu H."/>
            <person name="Lin Q."/>
            <person name="Ohashi N."/>
            <person name="Zhi N."/>
            <person name="Nelson W.C."/>
            <person name="Brinkac L.M."/>
            <person name="Dodson R.J."/>
            <person name="Rosovitz M.J."/>
            <person name="Sundaram J.P."/>
            <person name="Daugherty S.C."/>
            <person name="Davidsen T."/>
            <person name="Durkin A.S."/>
            <person name="Gwinn M.L."/>
            <person name="Haft D.H."/>
            <person name="Selengut J.D."/>
            <person name="Sullivan S.A."/>
            <person name="Zafar N."/>
            <person name="Zhou L."/>
            <person name="Benahmed F."/>
            <person name="Forberger H."/>
            <person name="Halpin R."/>
            <person name="Mulligan S."/>
            <person name="Robinson J."/>
            <person name="White O."/>
            <person name="Rikihisa Y."/>
            <person name="Tettelin H."/>
        </authorList>
    </citation>
    <scope>NUCLEOTIDE SEQUENCE [LARGE SCALE GENOMIC DNA]</scope>
    <source>
        <strain>HZ</strain>
    </source>
</reference>
<accession>Q2GIJ7</accession>
<feature type="chain" id="PRO_0000284157" description="Endoribonuclease YbeY">
    <location>
        <begin position="1"/>
        <end position="154"/>
    </location>
</feature>
<feature type="binding site" evidence="1">
    <location>
        <position position="114"/>
    </location>
    <ligand>
        <name>Zn(2+)</name>
        <dbReference type="ChEBI" id="CHEBI:29105"/>
        <note>catalytic</note>
    </ligand>
</feature>
<feature type="binding site" evidence="1">
    <location>
        <position position="118"/>
    </location>
    <ligand>
        <name>Zn(2+)</name>
        <dbReference type="ChEBI" id="CHEBI:29105"/>
        <note>catalytic</note>
    </ligand>
</feature>
<feature type="binding site" evidence="1">
    <location>
        <position position="124"/>
    </location>
    <ligand>
        <name>Zn(2+)</name>
        <dbReference type="ChEBI" id="CHEBI:29105"/>
        <note>catalytic</note>
    </ligand>
</feature>
<protein>
    <recommendedName>
        <fullName evidence="1">Endoribonuclease YbeY</fullName>
        <ecNumber evidence="1">3.1.-.-</ecNumber>
    </recommendedName>
</protein>